<evidence type="ECO:0000250" key="1"/>
<evidence type="ECO:0000255" key="2">
    <source>
        <dbReference type="HAMAP-Rule" id="MF_00100"/>
    </source>
</evidence>
<proteinExistence type="inferred from homology"/>
<accession>Q4A9A2</accession>
<gene>
    <name evidence="2" type="primary">infB</name>
    <name type="ordered locus">MHJ_0585</name>
</gene>
<organism>
    <name type="scientific">Mesomycoplasma hyopneumoniae (strain J / ATCC 25934 / NCTC 10110)</name>
    <name type="common">Mycoplasma hyopneumoniae</name>
    <dbReference type="NCBI Taxonomy" id="262719"/>
    <lineage>
        <taxon>Bacteria</taxon>
        <taxon>Bacillati</taxon>
        <taxon>Mycoplasmatota</taxon>
        <taxon>Mycoplasmoidales</taxon>
        <taxon>Metamycoplasmataceae</taxon>
        <taxon>Mesomycoplasma</taxon>
    </lineage>
</organism>
<comment type="function">
    <text evidence="2">One of the essential components for the initiation of protein synthesis. Protects formylmethionyl-tRNA from spontaneous hydrolysis and promotes its binding to the 30S ribosomal subunits. Also involved in the hydrolysis of GTP during the formation of the 70S ribosomal complex.</text>
</comment>
<comment type="subcellular location">
    <subcellularLocation>
        <location evidence="2">Cytoplasm</location>
    </subcellularLocation>
</comment>
<comment type="similarity">
    <text evidence="2">Belongs to the TRAFAC class translation factor GTPase superfamily. Classic translation factor GTPase family. IF-2 subfamily.</text>
</comment>
<protein>
    <recommendedName>
        <fullName evidence="2">Translation initiation factor IF-2</fullName>
    </recommendedName>
</protein>
<reference key="1">
    <citation type="journal article" date="2005" name="J. Bacteriol.">
        <title>Swine and poultry pathogens: the complete genome sequences of two strains of Mycoplasma hyopneumoniae and a strain of Mycoplasma synoviae.</title>
        <authorList>
            <person name="Vasconcelos A.T.R."/>
            <person name="Ferreira H.B."/>
            <person name="Bizarro C.V."/>
            <person name="Bonatto S.L."/>
            <person name="Carvalho M.O."/>
            <person name="Pinto P.M."/>
            <person name="Almeida D.F."/>
            <person name="Almeida L.G.P."/>
            <person name="Almeida R."/>
            <person name="Alves-Junior L."/>
            <person name="Assuncao E.N."/>
            <person name="Azevedo V.A.C."/>
            <person name="Bogo M.R."/>
            <person name="Brigido M.M."/>
            <person name="Brocchi M."/>
            <person name="Burity H.A."/>
            <person name="Camargo A.A."/>
            <person name="Camargo S.S."/>
            <person name="Carepo M.S."/>
            <person name="Carraro D.M."/>
            <person name="de Mattos Cascardo J.C."/>
            <person name="Castro L.A."/>
            <person name="Cavalcanti G."/>
            <person name="Chemale G."/>
            <person name="Collevatti R.G."/>
            <person name="Cunha C.W."/>
            <person name="Dallagiovanna B."/>
            <person name="Dambros B.P."/>
            <person name="Dellagostin O.A."/>
            <person name="Falcao C."/>
            <person name="Fantinatti-Garboggini F."/>
            <person name="Felipe M.S.S."/>
            <person name="Fiorentin L."/>
            <person name="Franco G.R."/>
            <person name="Freitas N.S.A."/>
            <person name="Frias D."/>
            <person name="Grangeiro T.B."/>
            <person name="Grisard E.C."/>
            <person name="Guimaraes C.T."/>
            <person name="Hungria M."/>
            <person name="Jardim S.N."/>
            <person name="Krieger M.A."/>
            <person name="Laurino J.P."/>
            <person name="Lima L.F.A."/>
            <person name="Lopes M.I."/>
            <person name="Loreto E.L.S."/>
            <person name="Madeira H.M.F."/>
            <person name="Manfio G.P."/>
            <person name="Maranhao A.Q."/>
            <person name="Martinkovics C.T."/>
            <person name="Medeiros S.R.B."/>
            <person name="Moreira M.A.M."/>
            <person name="Neiva M."/>
            <person name="Ramalho-Neto C.E."/>
            <person name="Nicolas M.F."/>
            <person name="Oliveira S.C."/>
            <person name="Paixao R.F.C."/>
            <person name="Pedrosa F.O."/>
            <person name="Pena S.D.J."/>
            <person name="Pereira M."/>
            <person name="Pereira-Ferrari L."/>
            <person name="Piffer I."/>
            <person name="Pinto L.S."/>
            <person name="Potrich D.P."/>
            <person name="Salim A.C.M."/>
            <person name="Santos F.R."/>
            <person name="Schmitt R."/>
            <person name="Schneider M.P.C."/>
            <person name="Schrank A."/>
            <person name="Schrank I.S."/>
            <person name="Schuck A.F."/>
            <person name="Seuanez H.N."/>
            <person name="Silva D.W."/>
            <person name="Silva R."/>
            <person name="Silva S.C."/>
            <person name="Soares C.M.A."/>
            <person name="Souza K.R.L."/>
            <person name="Souza R.C."/>
            <person name="Staats C.C."/>
            <person name="Steffens M.B.R."/>
            <person name="Teixeira S.M.R."/>
            <person name="Urmenyi T.P."/>
            <person name="Vainstein M.H."/>
            <person name="Zuccherato L.W."/>
            <person name="Simpson A.J.G."/>
            <person name="Zaha A."/>
        </authorList>
    </citation>
    <scope>NUCLEOTIDE SEQUENCE [LARGE SCALE GENOMIC DNA]</scope>
    <source>
        <strain>J / ATCC 25934 / NCTC 10110</strain>
    </source>
</reference>
<name>IF2_MESHJ</name>
<feature type="chain" id="PRO_0000232587" description="Translation initiation factor IF-2">
    <location>
        <begin position="1"/>
        <end position="599"/>
    </location>
</feature>
<feature type="domain" description="tr-type G">
    <location>
        <begin position="111"/>
        <end position="278"/>
    </location>
</feature>
<feature type="region of interest" description="G1" evidence="1">
    <location>
        <begin position="120"/>
        <end position="127"/>
    </location>
</feature>
<feature type="region of interest" description="G2" evidence="1">
    <location>
        <begin position="145"/>
        <end position="149"/>
    </location>
</feature>
<feature type="region of interest" description="G3" evidence="1">
    <location>
        <begin position="166"/>
        <end position="169"/>
    </location>
</feature>
<feature type="region of interest" description="G4" evidence="1">
    <location>
        <begin position="220"/>
        <end position="223"/>
    </location>
</feature>
<feature type="region of interest" description="G5" evidence="1">
    <location>
        <begin position="256"/>
        <end position="258"/>
    </location>
</feature>
<feature type="binding site" evidence="2">
    <location>
        <begin position="120"/>
        <end position="127"/>
    </location>
    <ligand>
        <name>GTP</name>
        <dbReference type="ChEBI" id="CHEBI:37565"/>
    </ligand>
</feature>
<feature type="binding site" evidence="2">
    <location>
        <begin position="166"/>
        <end position="170"/>
    </location>
    <ligand>
        <name>GTP</name>
        <dbReference type="ChEBI" id="CHEBI:37565"/>
    </ligand>
</feature>
<feature type="binding site" evidence="2">
    <location>
        <begin position="220"/>
        <end position="223"/>
    </location>
    <ligand>
        <name>GTP</name>
        <dbReference type="ChEBI" id="CHEBI:37565"/>
    </ligand>
</feature>
<dbReference type="EMBL" id="AE017243">
    <property type="protein sequence ID" value="AAZ44669.1"/>
    <property type="molecule type" value="Genomic_DNA"/>
</dbReference>
<dbReference type="RefSeq" id="WP_011206432.1">
    <property type="nucleotide sequence ID" value="NC_007295.1"/>
</dbReference>
<dbReference type="SMR" id="Q4A9A2"/>
<dbReference type="GeneID" id="41334882"/>
<dbReference type="KEGG" id="mhj:MHJ_0585"/>
<dbReference type="eggNOG" id="COG0532">
    <property type="taxonomic scope" value="Bacteria"/>
</dbReference>
<dbReference type="HOGENOM" id="CLU_006301_5_1_14"/>
<dbReference type="OrthoDB" id="9811804at2"/>
<dbReference type="Proteomes" id="UP000000548">
    <property type="component" value="Chromosome"/>
</dbReference>
<dbReference type="GO" id="GO:0005829">
    <property type="term" value="C:cytosol"/>
    <property type="evidence" value="ECO:0007669"/>
    <property type="project" value="TreeGrafter"/>
</dbReference>
<dbReference type="GO" id="GO:0005525">
    <property type="term" value="F:GTP binding"/>
    <property type="evidence" value="ECO:0007669"/>
    <property type="project" value="UniProtKB-KW"/>
</dbReference>
<dbReference type="GO" id="GO:0003924">
    <property type="term" value="F:GTPase activity"/>
    <property type="evidence" value="ECO:0007669"/>
    <property type="project" value="UniProtKB-UniRule"/>
</dbReference>
<dbReference type="GO" id="GO:0003743">
    <property type="term" value="F:translation initiation factor activity"/>
    <property type="evidence" value="ECO:0007669"/>
    <property type="project" value="UniProtKB-UniRule"/>
</dbReference>
<dbReference type="CDD" id="cd01887">
    <property type="entry name" value="IF2_eIF5B"/>
    <property type="match status" value="1"/>
</dbReference>
<dbReference type="CDD" id="cd03702">
    <property type="entry name" value="IF2_mtIF2_II"/>
    <property type="match status" value="1"/>
</dbReference>
<dbReference type="CDD" id="cd03692">
    <property type="entry name" value="mtIF2_IVc"/>
    <property type="match status" value="1"/>
</dbReference>
<dbReference type="FunFam" id="2.40.30.10:FF:000008">
    <property type="entry name" value="Translation initiation factor IF-2"/>
    <property type="match status" value="1"/>
</dbReference>
<dbReference type="FunFam" id="2.40.30.10:FF:000054">
    <property type="entry name" value="Translation initiation factor IF-2"/>
    <property type="match status" value="1"/>
</dbReference>
<dbReference type="FunFam" id="3.40.50.10050:FF:000001">
    <property type="entry name" value="Translation initiation factor IF-2"/>
    <property type="match status" value="1"/>
</dbReference>
<dbReference type="FunFam" id="3.40.50.300:FF:000019">
    <property type="entry name" value="Translation initiation factor IF-2"/>
    <property type="match status" value="1"/>
</dbReference>
<dbReference type="Gene3D" id="3.40.50.300">
    <property type="entry name" value="P-loop containing nucleotide triphosphate hydrolases"/>
    <property type="match status" value="1"/>
</dbReference>
<dbReference type="Gene3D" id="2.40.30.10">
    <property type="entry name" value="Translation factors"/>
    <property type="match status" value="2"/>
</dbReference>
<dbReference type="Gene3D" id="3.40.50.10050">
    <property type="entry name" value="Translation initiation factor IF- 2, domain 3"/>
    <property type="match status" value="1"/>
</dbReference>
<dbReference type="HAMAP" id="MF_00100_B">
    <property type="entry name" value="IF_2_B"/>
    <property type="match status" value="1"/>
</dbReference>
<dbReference type="InterPro" id="IPR053905">
    <property type="entry name" value="EF-G-like_DII"/>
</dbReference>
<dbReference type="InterPro" id="IPR044145">
    <property type="entry name" value="IF2_II"/>
</dbReference>
<dbReference type="InterPro" id="IPR006847">
    <property type="entry name" value="IF2_N"/>
</dbReference>
<dbReference type="InterPro" id="IPR027417">
    <property type="entry name" value="P-loop_NTPase"/>
</dbReference>
<dbReference type="InterPro" id="IPR005225">
    <property type="entry name" value="Small_GTP-bd"/>
</dbReference>
<dbReference type="InterPro" id="IPR000795">
    <property type="entry name" value="T_Tr_GTP-bd_dom"/>
</dbReference>
<dbReference type="InterPro" id="IPR000178">
    <property type="entry name" value="TF_IF2_bacterial-like"/>
</dbReference>
<dbReference type="InterPro" id="IPR015760">
    <property type="entry name" value="TIF_IF2"/>
</dbReference>
<dbReference type="InterPro" id="IPR023115">
    <property type="entry name" value="TIF_IF2_dom3"/>
</dbReference>
<dbReference type="InterPro" id="IPR036925">
    <property type="entry name" value="TIF_IF2_dom3_sf"/>
</dbReference>
<dbReference type="InterPro" id="IPR009000">
    <property type="entry name" value="Transl_B-barrel_sf"/>
</dbReference>
<dbReference type="NCBIfam" id="TIGR00487">
    <property type="entry name" value="IF-2"/>
    <property type="match status" value="1"/>
</dbReference>
<dbReference type="NCBIfam" id="TIGR00231">
    <property type="entry name" value="small_GTP"/>
    <property type="match status" value="1"/>
</dbReference>
<dbReference type="PANTHER" id="PTHR43381:SF5">
    <property type="entry name" value="TR-TYPE G DOMAIN-CONTAINING PROTEIN"/>
    <property type="match status" value="1"/>
</dbReference>
<dbReference type="PANTHER" id="PTHR43381">
    <property type="entry name" value="TRANSLATION INITIATION FACTOR IF-2-RELATED"/>
    <property type="match status" value="1"/>
</dbReference>
<dbReference type="Pfam" id="PF22042">
    <property type="entry name" value="EF-G_D2"/>
    <property type="match status" value="1"/>
</dbReference>
<dbReference type="Pfam" id="PF00009">
    <property type="entry name" value="GTP_EFTU"/>
    <property type="match status" value="1"/>
</dbReference>
<dbReference type="Pfam" id="PF11987">
    <property type="entry name" value="IF-2"/>
    <property type="match status" value="1"/>
</dbReference>
<dbReference type="Pfam" id="PF04760">
    <property type="entry name" value="IF2_N"/>
    <property type="match status" value="1"/>
</dbReference>
<dbReference type="PRINTS" id="PR00315">
    <property type="entry name" value="ELONGATNFCT"/>
</dbReference>
<dbReference type="SUPFAM" id="SSF52156">
    <property type="entry name" value="Initiation factor IF2/eIF5b, domain 3"/>
    <property type="match status" value="1"/>
</dbReference>
<dbReference type="SUPFAM" id="SSF52540">
    <property type="entry name" value="P-loop containing nucleoside triphosphate hydrolases"/>
    <property type="match status" value="1"/>
</dbReference>
<dbReference type="SUPFAM" id="SSF50447">
    <property type="entry name" value="Translation proteins"/>
    <property type="match status" value="2"/>
</dbReference>
<dbReference type="PROSITE" id="PS51722">
    <property type="entry name" value="G_TR_2"/>
    <property type="match status" value="1"/>
</dbReference>
<keyword id="KW-0963">Cytoplasm</keyword>
<keyword id="KW-0342">GTP-binding</keyword>
<keyword id="KW-0396">Initiation factor</keyword>
<keyword id="KW-0547">Nucleotide-binding</keyword>
<keyword id="KW-0648">Protein biosynthesis</keyword>
<sequence>MKKSQKRISNVSEIKAQLKTVETKVHNGVFLFSGIMTIAELAQKINVSVNQIITYFFHQAKMYNLNHSLSEDEIAEICLEFGLDFKKEVQIDASNFMEEVSILDQDKDLSPRPPIITVMGHVDHGKTTLLDYIRKTNIAKNEKGGITQHTGAYQVVFQGHIINFIDTPGHEAFTQMRARGAKVTDIIVLVVAADDGVMPQTKEAINHAAAANVPIIVFVNKMDKPNKDVDRIKNELSALNIVTEEWGGSNIFVYGSALTGQGIDTLFSSILLLAEILELKANKNRYPIGTVIEAKLHHNKGTIATLMVQNGTLMVRDFIVAGYQYGRIRSLENTNGQPIKFAPPGTPVIVTGLNYVPEAGDKFFGFHEEKFAKQLALERKQSEKISKTKVQTKQQTKEKTLNIIIKADVAGIAQALHSTIEKLASKQVHIHILHSGVGIVNKADILLAQTSNSIIYAFNLQIPAAIKAQAKQAQVEIREHTIIYKIVDEIKKQVRGMREIRYELQQIGTAKIIAKFWFSKVGSIAGCSVLSGKFVENCKIELWRNSKLIHSGKIESLQRDKNPVKEVQVGNEFGTHIYKFNDIEIGDELKAFLDVEIEE</sequence>